<protein>
    <recommendedName>
        <fullName>UPF0102 protein YraN</fullName>
    </recommendedName>
</protein>
<dbReference type="EMBL" id="U18997">
    <property type="protein sequence ID" value="AAA57951.1"/>
    <property type="molecule type" value="Genomic_DNA"/>
</dbReference>
<dbReference type="EMBL" id="U00096">
    <property type="protein sequence ID" value="AAC76182.1"/>
    <property type="molecule type" value="Genomic_DNA"/>
</dbReference>
<dbReference type="EMBL" id="AP009048">
    <property type="protein sequence ID" value="BAE77194.1"/>
    <property type="molecule type" value="Genomic_DNA"/>
</dbReference>
<dbReference type="PIR" id="H65104">
    <property type="entry name" value="H65104"/>
</dbReference>
<dbReference type="RefSeq" id="NP_417617.1">
    <property type="nucleotide sequence ID" value="NC_000913.3"/>
</dbReference>
<dbReference type="RefSeq" id="WP_000246830.1">
    <property type="nucleotide sequence ID" value="NZ_LN832404.1"/>
</dbReference>
<dbReference type="SMR" id="P45465"/>
<dbReference type="BioGRID" id="4261990">
    <property type="interactions" value="168"/>
</dbReference>
<dbReference type="DIP" id="DIP-12898N"/>
<dbReference type="FunCoup" id="P45465">
    <property type="interactions" value="343"/>
</dbReference>
<dbReference type="IntAct" id="P45465">
    <property type="interactions" value="21"/>
</dbReference>
<dbReference type="STRING" id="511145.b3148"/>
<dbReference type="PaxDb" id="511145-b3148"/>
<dbReference type="EnsemblBacteria" id="AAC76182">
    <property type="protein sequence ID" value="AAC76182"/>
    <property type="gene ID" value="b3148"/>
</dbReference>
<dbReference type="GeneID" id="947662"/>
<dbReference type="KEGG" id="ecj:JW3117"/>
<dbReference type="KEGG" id="eco:b3148"/>
<dbReference type="KEGG" id="ecoc:C3026_17150"/>
<dbReference type="PATRIC" id="fig|511145.12.peg.3243"/>
<dbReference type="EchoBASE" id="EB2632"/>
<dbReference type="eggNOG" id="COG0792">
    <property type="taxonomic scope" value="Bacteria"/>
</dbReference>
<dbReference type="HOGENOM" id="CLU_115353_1_0_6"/>
<dbReference type="InParanoid" id="P45465"/>
<dbReference type="OMA" id="TVLERNW"/>
<dbReference type="OrthoDB" id="9794876at2"/>
<dbReference type="PhylomeDB" id="P45465"/>
<dbReference type="BioCyc" id="EcoCyc:G7643-MONOMER"/>
<dbReference type="PRO" id="PR:P45465"/>
<dbReference type="Proteomes" id="UP000000625">
    <property type="component" value="Chromosome"/>
</dbReference>
<dbReference type="GO" id="GO:0003676">
    <property type="term" value="F:nucleic acid binding"/>
    <property type="evidence" value="ECO:0007669"/>
    <property type="project" value="InterPro"/>
</dbReference>
<dbReference type="CDD" id="cd20736">
    <property type="entry name" value="PoNe_Nuclease"/>
    <property type="match status" value="1"/>
</dbReference>
<dbReference type="Gene3D" id="3.40.1350.10">
    <property type="match status" value="1"/>
</dbReference>
<dbReference type="HAMAP" id="MF_00048">
    <property type="entry name" value="UPF0102"/>
    <property type="match status" value="1"/>
</dbReference>
<dbReference type="InterPro" id="IPR011335">
    <property type="entry name" value="Restrct_endonuc-II-like"/>
</dbReference>
<dbReference type="InterPro" id="IPR011856">
    <property type="entry name" value="tRNA_endonuc-like_dom_sf"/>
</dbReference>
<dbReference type="InterPro" id="IPR003509">
    <property type="entry name" value="UPF0102_YraN-like"/>
</dbReference>
<dbReference type="NCBIfam" id="NF009150">
    <property type="entry name" value="PRK12497.1-3"/>
    <property type="match status" value="1"/>
</dbReference>
<dbReference type="NCBIfam" id="TIGR00252">
    <property type="entry name" value="YraN family protein"/>
    <property type="match status" value="1"/>
</dbReference>
<dbReference type="PANTHER" id="PTHR34039">
    <property type="entry name" value="UPF0102 PROTEIN YRAN"/>
    <property type="match status" value="1"/>
</dbReference>
<dbReference type="PANTHER" id="PTHR34039:SF1">
    <property type="entry name" value="UPF0102 PROTEIN YRAN"/>
    <property type="match status" value="1"/>
</dbReference>
<dbReference type="Pfam" id="PF02021">
    <property type="entry name" value="UPF0102"/>
    <property type="match status" value="1"/>
</dbReference>
<dbReference type="SUPFAM" id="SSF52980">
    <property type="entry name" value="Restriction endonuclease-like"/>
    <property type="match status" value="1"/>
</dbReference>
<name>YRAN_ECOLI</name>
<evidence type="ECO:0000256" key="1">
    <source>
        <dbReference type="SAM" id="MobiDB-lite"/>
    </source>
</evidence>
<evidence type="ECO:0000305" key="2"/>
<reference key="1">
    <citation type="journal article" date="1997" name="Science">
        <title>The complete genome sequence of Escherichia coli K-12.</title>
        <authorList>
            <person name="Blattner F.R."/>
            <person name="Plunkett G. III"/>
            <person name="Bloch C.A."/>
            <person name="Perna N.T."/>
            <person name="Burland V."/>
            <person name="Riley M."/>
            <person name="Collado-Vides J."/>
            <person name="Glasner J.D."/>
            <person name="Rode C.K."/>
            <person name="Mayhew G.F."/>
            <person name="Gregor J."/>
            <person name="Davis N.W."/>
            <person name="Kirkpatrick H.A."/>
            <person name="Goeden M.A."/>
            <person name="Rose D.J."/>
            <person name="Mau B."/>
            <person name="Shao Y."/>
        </authorList>
    </citation>
    <scope>NUCLEOTIDE SEQUENCE [LARGE SCALE GENOMIC DNA]</scope>
    <source>
        <strain>K12 / MG1655 / ATCC 47076</strain>
    </source>
</reference>
<reference key="2">
    <citation type="journal article" date="2006" name="Mol. Syst. Biol.">
        <title>Highly accurate genome sequences of Escherichia coli K-12 strains MG1655 and W3110.</title>
        <authorList>
            <person name="Hayashi K."/>
            <person name="Morooka N."/>
            <person name="Yamamoto Y."/>
            <person name="Fujita K."/>
            <person name="Isono K."/>
            <person name="Choi S."/>
            <person name="Ohtsubo E."/>
            <person name="Baba T."/>
            <person name="Wanner B.L."/>
            <person name="Mori H."/>
            <person name="Horiuchi T."/>
        </authorList>
    </citation>
    <scope>NUCLEOTIDE SEQUENCE [LARGE SCALE GENOMIC DNA]</scope>
    <source>
        <strain>K12 / W3110 / ATCC 27325 / DSM 5911</strain>
    </source>
</reference>
<feature type="chain" id="PRO_0000167349" description="UPF0102 protein YraN">
    <location>
        <begin position="1"/>
        <end position="131"/>
    </location>
</feature>
<feature type="region of interest" description="Disordered" evidence="1">
    <location>
        <begin position="1"/>
        <end position="21"/>
    </location>
</feature>
<feature type="compositionally biased region" description="Polar residues" evidence="1">
    <location>
        <begin position="1"/>
        <end position="19"/>
    </location>
</feature>
<accession>P45465</accession>
<accession>Q2M962</accession>
<gene>
    <name type="primary">yraN</name>
    <name type="ordered locus">b3148</name>
    <name type="ordered locus">JW3117</name>
</gene>
<sequence>MATVPTRSGSPRQLTTKQTGDAWEAQARRWLEGKGLRFIAANVNERGGEIDLIMREGRTTIFVEVRYRRSALYGGAAASVTRSKQHKLLQTARLWLARHNGSFDTVDCRFDVVAFTGNEVEWIKDAFNDHS</sequence>
<keyword id="KW-1185">Reference proteome</keyword>
<comment type="similarity">
    <text evidence="2">Belongs to the UPF0102 family.</text>
</comment>
<proteinExistence type="inferred from homology"/>
<organism>
    <name type="scientific">Escherichia coli (strain K12)</name>
    <dbReference type="NCBI Taxonomy" id="83333"/>
    <lineage>
        <taxon>Bacteria</taxon>
        <taxon>Pseudomonadati</taxon>
        <taxon>Pseudomonadota</taxon>
        <taxon>Gammaproteobacteria</taxon>
        <taxon>Enterobacterales</taxon>
        <taxon>Enterobacteriaceae</taxon>
        <taxon>Escherichia</taxon>
    </lineage>
</organism>